<evidence type="ECO:0000250" key="1"/>
<evidence type="ECO:0000255" key="2">
    <source>
        <dbReference type="HAMAP-Rule" id="MF_00100"/>
    </source>
</evidence>
<evidence type="ECO:0000256" key="3">
    <source>
        <dbReference type="SAM" id="MobiDB-lite"/>
    </source>
</evidence>
<evidence type="ECO:0000305" key="4"/>
<keyword id="KW-0963">Cytoplasm</keyword>
<keyword id="KW-0342">GTP-binding</keyword>
<keyword id="KW-0396">Initiation factor</keyword>
<keyword id="KW-0547">Nucleotide-binding</keyword>
<keyword id="KW-0648">Protein biosynthesis</keyword>
<gene>
    <name evidence="2" type="primary">infB</name>
    <name type="ordered locus">BOV_2077</name>
</gene>
<feature type="chain" id="PRO_0000335460" description="Translation initiation factor IF-2">
    <location>
        <begin position="1"/>
        <end position="959"/>
    </location>
</feature>
<feature type="domain" description="tr-type G">
    <location>
        <begin position="457"/>
        <end position="626"/>
    </location>
</feature>
<feature type="region of interest" description="Disordered" evidence="3">
    <location>
        <begin position="1"/>
        <end position="374"/>
    </location>
</feature>
<feature type="region of interest" description="G1" evidence="1">
    <location>
        <begin position="466"/>
        <end position="473"/>
    </location>
</feature>
<feature type="region of interest" description="G2" evidence="1">
    <location>
        <begin position="491"/>
        <end position="495"/>
    </location>
</feature>
<feature type="region of interest" description="G3" evidence="1">
    <location>
        <begin position="512"/>
        <end position="515"/>
    </location>
</feature>
<feature type="region of interest" description="G4" evidence="1">
    <location>
        <begin position="566"/>
        <end position="569"/>
    </location>
</feature>
<feature type="region of interest" description="G5" evidence="1">
    <location>
        <begin position="602"/>
        <end position="604"/>
    </location>
</feature>
<feature type="compositionally biased region" description="Basic and acidic residues" evidence="3">
    <location>
        <begin position="1"/>
        <end position="10"/>
    </location>
</feature>
<feature type="compositionally biased region" description="Polar residues" evidence="3">
    <location>
        <begin position="27"/>
        <end position="37"/>
    </location>
</feature>
<feature type="compositionally biased region" description="Low complexity" evidence="3">
    <location>
        <begin position="63"/>
        <end position="118"/>
    </location>
</feature>
<feature type="compositionally biased region" description="Low complexity" evidence="3">
    <location>
        <begin position="128"/>
        <end position="138"/>
    </location>
</feature>
<feature type="compositionally biased region" description="Basic and acidic residues" evidence="3">
    <location>
        <begin position="154"/>
        <end position="225"/>
    </location>
</feature>
<feature type="compositionally biased region" description="Basic and acidic residues" evidence="3">
    <location>
        <begin position="232"/>
        <end position="241"/>
    </location>
</feature>
<feature type="compositionally biased region" description="Low complexity" evidence="3">
    <location>
        <begin position="246"/>
        <end position="284"/>
    </location>
</feature>
<feature type="compositionally biased region" description="Basic and acidic residues" evidence="3">
    <location>
        <begin position="318"/>
        <end position="333"/>
    </location>
</feature>
<feature type="binding site" evidence="2">
    <location>
        <begin position="466"/>
        <end position="473"/>
    </location>
    <ligand>
        <name>GTP</name>
        <dbReference type="ChEBI" id="CHEBI:37565"/>
    </ligand>
</feature>
<feature type="binding site" evidence="2">
    <location>
        <begin position="512"/>
        <end position="516"/>
    </location>
    <ligand>
        <name>GTP</name>
        <dbReference type="ChEBI" id="CHEBI:37565"/>
    </ligand>
</feature>
<feature type="binding site" evidence="2">
    <location>
        <begin position="566"/>
        <end position="569"/>
    </location>
    <ligand>
        <name>GTP</name>
        <dbReference type="ChEBI" id="CHEBI:37565"/>
    </ligand>
</feature>
<comment type="function">
    <text evidence="2">One of the essential components for the initiation of protein synthesis. Protects formylmethionyl-tRNA from spontaneous hydrolysis and promotes its binding to the 30S ribosomal subunits. Also involved in the hydrolysis of GTP during the formation of the 70S ribosomal complex.</text>
</comment>
<comment type="subcellular location">
    <subcellularLocation>
        <location evidence="2">Cytoplasm</location>
    </subcellularLocation>
</comment>
<comment type="similarity">
    <text evidence="2">Belongs to the TRAFAC class translation factor GTPase superfamily. Classic translation factor GTPase family. IF-2 subfamily.</text>
</comment>
<comment type="sequence caution" evidence="4">
    <conflict type="erroneous initiation">
        <sequence resource="EMBL-CDS" id="ABQ61371"/>
    </conflict>
</comment>
<reference key="1">
    <citation type="journal article" date="2009" name="PLoS ONE">
        <title>Genome degradation in Brucella ovis corresponds with narrowing of its host range and tissue tropism.</title>
        <authorList>
            <person name="Tsolis R.M."/>
            <person name="Seshadri R."/>
            <person name="Santos R.L."/>
            <person name="Sangari F.J."/>
            <person name="Lobo J.M."/>
            <person name="de Jong M.F."/>
            <person name="Ren Q."/>
            <person name="Myers G."/>
            <person name="Brinkac L.M."/>
            <person name="Nelson W.C."/>
            <person name="Deboy R.T."/>
            <person name="Angiuoli S."/>
            <person name="Khouri H."/>
            <person name="Dimitrov G."/>
            <person name="Robinson J.R."/>
            <person name="Mulligan S."/>
            <person name="Walker R.L."/>
            <person name="Elzer P.E."/>
            <person name="Hassan K.A."/>
            <person name="Paulsen I.T."/>
        </authorList>
    </citation>
    <scope>NUCLEOTIDE SEQUENCE [LARGE SCALE GENOMIC DNA]</scope>
    <source>
        <strain>ATCC 25840 / 63/290 / NCTC 10512</strain>
    </source>
</reference>
<proteinExistence type="inferred from homology"/>
<protein>
    <recommendedName>
        <fullName evidence="2">Translation initiation factor IF-2</fullName>
    </recommendedName>
</protein>
<dbReference type="EMBL" id="CP000708">
    <property type="protein sequence ID" value="ABQ61371.1"/>
    <property type="status" value="ALT_INIT"/>
    <property type="molecule type" value="Genomic_DNA"/>
</dbReference>
<dbReference type="RefSeq" id="WP_006014602.1">
    <property type="nucleotide sequence ID" value="NC_009505.1"/>
</dbReference>
<dbReference type="SMR" id="A5VTB2"/>
<dbReference type="GeneID" id="45125408"/>
<dbReference type="KEGG" id="bov:BOV_2077"/>
<dbReference type="HOGENOM" id="CLU_006301_10_0_5"/>
<dbReference type="PhylomeDB" id="A5VTB2"/>
<dbReference type="Proteomes" id="UP000006383">
    <property type="component" value="Chromosome I"/>
</dbReference>
<dbReference type="GO" id="GO:0005829">
    <property type="term" value="C:cytosol"/>
    <property type="evidence" value="ECO:0007669"/>
    <property type="project" value="TreeGrafter"/>
</dbReference>
<dbReference type="GO" id="GO:0005525">
    <property type="term" value="F:GTP binding"/>
    <property type="evidence" value="ECO:0007669"/>
    <property type="project" value="UniProtKB-KW"/>
</dbReference>
<dbReference type="GO" id="GO:0003924">
    <property type="term" value="F:GTPase activity"/>
    <property type="evidence" value="ECO:0007669"/>
    <property type="project" value="UniProtKB-UniRule"/>
</dbReference>
<dbReference type="GO" id="GO:0097216">
    <property type="term" value="F:guanosine tetraphosphate binding"/>
    <property type="evidence" value="ECO:0007669"/>
    <property type="project" value="UniProtKB-ARBA"/>
</dbReference>
<dbReference type="GO" id="GO:0003743">
    <property type="term" value="F:translation initiation factor activity"/>
    <property type="evidence" value="ECO:0007669"/>
    <property type="project" value="UniProtKB-UniRule"/>
</dbReference>
<dbReference type="CDD" id="cd01887">
    <property type="entry name" value="IF2_eIF5B"/>
    <property type="match status" value="1"/>
</dbReference>
<dbReference type="CDD" id="cd03702">
    <property type="entry name" value="IF2_mtIF2_II"/>
    <property type="match status" value="1"/>
</dbReference>
<dbReference type="CDD" id="cd03692">
    <property type="entry name" value="mtIF2_IVc"/>
    <property type="match status" value="1"/>
</dbReference>
<dbReference type="CDD" id="cd22265">
    <property type="entry name" value="UDM1_RNF168"/>
    <property type="match status" value="1"/>
</dbReference>
<dbReference type="FunFam" id="2.40.30.10:FF:000007">
    <property type="entry name" value="Translation initiation factor IF-2"/>
    <property type="match status" value="1"/>
</dbReference>
<dbReference type="FunFam" id="2.40.30.10:FF:000008">
    <property type="entry name" value="Translation initiation factor IF-2"/>
    <property type="match status" value="1"/>
</dbReference>
<dbReference type="FunFam" id="3.40.50.10050:FF:000001">
    <property type="entry name" value="Translation initiation factor IF-2"/>
    <property type="match status" value="1"/>
</dbReference>
<dbReference type="FunFam" id="3.40.50.300:FF:000019">
    <property type="entry name" value="Translation initiation factor IF-2"/>
    <property type="match status" value="1"/>
</dbReference>
<dbReference type="Gene3D" id="3.40.50.300">
    <property type="entry name" value="P-loop containing nucleotide triphosphate hydrolases"/>
    <property type="match status" value="1"/>
</dbReference>
<dbReference type="Gene3D" id="2.40.30.10">
    <property type="entry name" value="Translation factors"/>
    <property type="match status" value="2"/>
</dbReference>
<dbReference type="Gene3D" id="3.40.50.10050">
    <property type="entry name" value="Translation initiation factor IF- 2, domain 3"/>
    <property type="match status" value="1"/>
</dbReference>
<dbReference type="HAMAP" id="MF_00100_B">
    <property type="entry name" value="IF_2_B"/>
    <property type="match status" value="1"/>
</dbReference>
<dbReference type="InterPro" id="IPR053905">
    <property type="entry name" value="EF-G-like_DII"/>
</dbReference>
<dbReference type="InterPro" id="IPR004161">
    <property type="entry name" value="EFTu-like_2"/>
</dbReference>
<dbReference type="InterPro" id="IPR013575">
    <property type="entry name" value="IF2_assoc_dom_bac"/>
</dbReference>
<dbReference type="InterPro" id="IPR044145">
    <property type="entry name" value="IF2_II"/>
</dbReference>
<dbReference type="InterPro" id="IPR006847">
    <property type="entry name" value="IF2_N"/>
</dbReference>
<dbReference type="InterPro" id="IPR027417">
    <property type="entry name" value="P-loop_NTPase"/>
</dbReference>
<dbReference type="InterPro" id="IPR005225">
    <property type="entry name" value="Small_GTP-bd"/>
</dbReference>
<dbReference type="InterPro" id="IPR000795">
    <property type="entry name" value="T_Tr_GTP-bd_dom"/>
</dbReference>
<dbReference type="InterPro" id="IPR000178">
    <property type="entry name" value="TF_IF2_bacterial-like"/>
</dbReference>
<dbReference type="InterPro" id="IPR015760">
    <property type="entry name" value="TIF_IF2"/>
</dbReference>
<dbReference type="InterPro" id="IPR023115">
    <property type="entry name" value="TIF_IF2_dom3"/>
</dbReference>
<dbReference type="InterPro" id="IPR036925">
    <property type="entry name" value="TIF_IF2_dom3_sf"/>
</dbReference>
<dbReference type="InterPro" id="IPR009000">
    <property type="entry name" value="Transl_B-barrel_sf"/>
</dbReference>
<dbReference type="NCBIfam" id="TIGR00487">
    <property type="entry name" value="IF-2"/>
    <property type="match status" value="1"/>
</dbReference>
<dbReference type="NCBIfam" id="TIGR00231">
    <property type="entry name" value="small_GTP"/>
    <property type="match status" value="1"/>
</dbReference>
<dbReference type="PANTHER" id="PTHR43381:SF5">
    <property type="entry name" value="TR-TYPE G DOMAIN-CONTAINING PROTEIN"/>
    <property type="match status" value="1"/>
</dbReference>
<dbReference type="PANTHER" id="PTHR43381">
    <property type="entry name" value="TRANSLATION INITIATION FACTOR IF-2-RELATED"/>
    <property type="match status" value="1"/>
</dbReference>
<dbReference type="Pfam" id="PF22042">
    <property type="entry name" value="EF-G_D2"/>
    <property type="match status" value="1"/>
</dbReference>
<dbReference type="Pfam" id="PF00009">
    <property type="entry name" value="GTP_EFTU"/>
    <property type="match status" value="1"/>
</dbReference>
<dbReference type="Pfam" id="PF03144">
    <property type="entry name" value="GTP_EFTU_D2"/>
    <property type="match status" value="1"/>
</dbReference>
<dbReference type="Pfam" id="PF11987">
    <property type="entry name" value="IF-2"/>
    <property type="match status" value="1"/>
</dbReference>
<dbReference type="Pfam" id="PF08364">
    <property type="entry name" value="IF2_assoc"/>
    <property type="match status" value="1"/>
</dbReference>
<dbReference type="Pfam" id="PF04760">
    <property type="entry name" value="IF2_N"/>
    <property type="match status" value="1"/>
</dbReference>
<dbReference type="SUPFAM" id="SSF52156">
    <property type="entry name" value="Initiation factor IF2/eIF5b, domain 3"/>
    <property type="match status" value="1"/>
</dbReference>
<dbReference type="SUPFAM" id="SSF52540">
    <property type="entry name" value="P-loop containing nucleoside triphosphate hydrolases"/>
    <property type="match status" value="1"/>
</dbReference>
<dbReference type="SUPFAM" id="SSF50447">
    <property type="entry name" value="Translation proteins"/>
    <property type="match status" value="2"/>
</dbReference>
<dbReference type="PROSITE" id="PS51722">
    <property type="entry name" value="G_TR_2"/>
    <property type="match status" value="1"/>
</dbReference>
<dbReference type="PROSITE" id="PS01176">
    <property type="entry name" value="IF2"/>
    <property type="match status" value="1"/>
</dbReference>
<accession>A5VTB2</accession>
<sequence length="959" mass="104100">MSDKTNDDKTLSVNPKKTLTLKRPGVEQSTVRQNFSHGRTKAVVVETKKRKFSRPDEKPEVEAAAAPKPAAPAAAPQQAPASAPVSASAAQASAPQPAPVKAPATKAPAAPSAPVTKPHVAQQRPVHQRPGGQQAQRPRPADRSGMVLNTLSRSEMDARRRALEEAQIREVEERARAVEEAKRRAEEDARRAKEREESARRQAEEEARLKAEAEARRKAEEEAAKRMPQPEARSERRDDARPAPYGARPQQAGRPQGGRPQPAGRPQQGSPRPAPIIADAAPIAGKPLPQSQLRKPGQSDDDDDRRSGAARRGVAAKPEVRAPKVVKGEDDRRRGKLTLTSNLEEEGRSRSLSAMRRRQEKFKRSQMQETREKISREVTIPETITLQELAQRMAERSVDIIKYLMKQGQMMKPGDVIDADTAQLIAEEFGHTVKRVAESDVEEGIFDVADNESAMVSRPPVVTIMGHVDHGKTSLLDAIRHANVVSGEAGGITQHIGAYQVVQNGQKITFIDTPGHAAFTAMRARGAQATDIAILVVAADDSVMPQTIESINHAKAAGVPIIVAINKIDKPAADPQKVCTALLQHEVFVESMGGEVLDVEVSAKNKINLDKLLDAVLLQAEMLDLKADPDRTAEGVVIEAQLDRGRGSVATVLIQKGTLHPGDILVAGSEWGRVRALVNDRGEHVKEAGPAMPVEILGLQGTPQAGDRFAVVANEAKAREIAEYRQRLARDKAVARQSGARGSLEQMMNQLQVSGTKEFPLVIKGDVQGSIEAIINALDKLGTDEVRARIVHSGAGGITESDVSLAEASNAAIIGFNVRANKQARDSAEQQGIEIRYYNIIYDLIDDVKAAMSGLLSPERRETFLGNAEILEVFNITKVGKVAGCRVTEGKVERGAGVRLIRDNVVIHEGKLKTLKRFKDEVAEVPSGQECGMAFENYDDIRAGDVIEAFRVEHVSRTL</sequence>
<organism>
    <name type="scientific">Brucella ovis (strain ATCC 25840 / 63/290 / NCTC 10512)</name>
    <dbReference type="NCBI Taxonomy" id="444178"/>
    <lineage>
        <taxon>Bacteria</taxon>
        <taxon>Pseudomonadati</taxon>
        <taxon>Pseudomonadota</taxon>
        <taxon>Alphaproteobacteria</taxon>
        <taxon>Hyphomicrobiales</taxon>
        <taxon>Brucellaceae</taxon>
        <taxon>Brucella/Ochrobactrum group</taxon>
        <taxon>Brucella</taxon>
    </lineage>
</organism>
<name>IF2_BRUO2</name>